<sequence length="40" mass="4184">MKITSALVLLFAGVAFAQSADPNTNENKNVIHINSPSAAK</sequence>
<gene>
    <name type="primary">Mst57Db</name>
    <name type="ORF">CG5016</name>
</gene>
<comment type="function">
    <text>Transferred from male to female during mating and may affect egglaying and behavior after mating.</text>
</comment>
<comment type="subcellular location">
    <subcellularLocation>
        <location evidence="2">Secreted</location>
    </subcellularLocation>
</comment>
<comment type="tissue specificity">
    <text evidence="2">Lumen fluid of male accessory glands, becomes seminal fluid.</text>
</comment>
<comment type="developmental stage">
    <text evidence="2">Last day of pupal development and adults.</text>
</comment>
<organism>
    <name type="scientific">Drosophila melanogaster</name>
    <name type="common">Fruit fly</name>
    <dbReference type="NCBI Taxonomy" id="7227"/>
    <lineage>
        <taxon>Eukaryota</taxon>
        <taxon>Metazoa</taxon>
        <taxon>Ecdysozoa</taxon>
        <taxon>Arthropoda</taxon>
        <taxon>Hexapoda</taxon>
        <taxon>Insecta</taxon>
        <taxon>Pterygota</taxon>
        <taxon>Neoptera</taxon>
        <taxon>Endopterygota</taxon>
        <taxon>Diptera</taxon>
        <taxon>Brachycera</taxon>
        <taxon>Muscomorpha</taxon>
        <taxon>Ephydroidea</taxon>
        <taxon>Drosophilidae</taxon>
        <taxon>Drosophila</taxon>
        <taxon>Sophophora</taxon>
    </lineage>
</organism>
<protein>
    <recommendedName>
        <fullName>Accessory gland-specific peptide 57Db</fullName>
    </recommendedName>
    <alternativeName>
        <fullName>Male accessory gland secretory protein 57Db</fullName>
    </alternativeName>
</protein>
<name>MS57B_DROME</name>
<proteinExistence type="evidence at transcript level"/>
<reference evidence="3" key="1">
    <citation type="journal article" date="1995" name="Insect Biochem. Mol. Biol.">
        <title>Structure and regulation of a gene cluster for male accessory gland transcripts in Drosophila melanogaster.</title>
        <authorList>
            <person name="Simmerl E."/>
            <person name="Schaefer M."/>
            <person name="Schaefer U."/>
        </authorList>
    </citation>
    <scope>NUCLEOTIDE SEQUENCE [GENOMIC DNA]</scope>
    <scope>TISSUE SPECIFICITY</scope>
    <scope>DEVELOPMENTAL STAGE</scope>
    <source>
        <strain>Oregon-R</strain>
        <tissue>Male accessory gland</tissue>
    </source>
</reference>
<reference evidence="3" key="2">
    <citation type="journal article" date="2000" name="Science">
        <title>The genome sequence of Drosophila melanogaster.</title>
        <authorList>
            <person name="Adams M.D."/>
            <person name="Celniker S.E."/>
            <person name="Holt R.A."/>
            <person name="Evans C.A."/>
            <person name="Gocayne J.D."/>
            <person name="Amanatides P.G."/>
            <person name="Scherer S.E."/>
            <person name="Li P.W."/>
            <person name="Hoskins R.A."/>
            <person name="Galle R.F."/>
            <person name="George R.A."/>
            <person name="Lewis S.E."/>
            <person name="Richards S."/>
            <person name="Ashburner M."/>
            <person name="Henderson S.N."/>
            <person name="Sutton G.G."/>
            <person name="Wortman J.R."/>
            <person name="Yandell M.D."/>
            <person name="Zhang Q."/>
            <person name="Chen L.X."/>
            <person name="Brandon R.C."/>
            <person name="Rogers Y.-H.C."/>
            <person name="Blazej R.G."/>
            <person name="Champe M."/>
            <person name="Pfeiffer B.D."/>
            <person name="Wan K.H."/>
            <person name="Doyle C."/>
            <person name="Baxter E.G."/>
            <person name="Helt G."/>
            <person name="Nelson C.R."/>
            <person name="Miklos G.L.G."/>
            <person name="Abril J.F."/>
            <person name="Agbayani A."/>
            <person name="An H.-J."/>
            <person name="Andrews-Pfannkoch C."/>
            <person name="Baldwin D."/>
            <person name="Ballew R.M."/>
            <person name="Basu A."/>
            <person name="Baxendale J."/>
            <person name="Bayraktaroglu L."/>
            <person name="Beasley E.M."/>
            <person name="Beeson K.Y."/>
            <person name="Benos P.V."/>
            <person name="Berman B.P."/>
            <person name="Bhandari D."/>
            <person name="Bolshakov S."/>
            <person name="Borkova D."/>
            <person name="Botchan M.R."/>
            <person name="Bouck J."/>
            <person name="Brokstein P."/>
            <person name="Brottier P."/>
            <person name="Burtis K.C."/>
            <person name="Busam D.A."/>
            <person name="Butler H."/>
            <person name="Cadieu E."/>
            <person name="Center A."/>
            <person name="Chandra I."/>
            <person name="Cherry J.M."/>
            <person name="Cawley S."/>
            <person name="Dahlke C."/>
            <person name="Davenport L.B."/>
            <person name="Davies P."/>
            <person name="de Pablos B."/>
            <person name="Delcher A."/>
            <person name="Deng Z."/>
            <person name="Mays A.D."/>
            <person name="Dew I."/>
            <person name="Dietz S.M."/>
            <person name="Dodson K."/>
            <person name="Doup L.E."/>
            <person name="Downes M."/>
            <person name="Dugan-Rocha S."/>
            <person name="Dunkov B.C."/>
            <person name="Dunn P."/>
            <person name="Durbin K.J."/>
            <person name="Evangelista C.C."/>
            <person name="Ferraz C."/>
            <person name="Ferriera S."/>
            <person name="Fleischmann W."/>
            <person name="Fosler C."/>
            <person name="Gabrielian A.E."/>
            <person name="Garg N.S."/>
            <person name="Gelbart W.M."/>
            <person name="Glasser K."/>
            <person name="Glodek A."/>
            <person name="Gong F."/>
            <person name="Gorrell J.H."/>
            <person name="Gu Z."/>
            <person name="Guan P."/>
            <person name="Harris M."/>
            <person name="Harris N.L."/>
            <person name="Harvey D.A."/>
            <person name="Heiman T.J."/>
            <person name="Hernandez J.R."/>
            <person name="Houck J."/>
            <person name="Hostin D."/>
            <person name="Houston K.A."/>
            <person name="Howland T.J."/>
            <person name="Wei M.-H."/>
            <person name="Ibegwam C."/>
            <person name="Jalali M."/>
            <person name="Kalush F."/>
            <person name="Karpen G.H."/>
            <person name="Ke Z."/>
            <person name="Kennison J.A."/>
            <person name="Ketchum K.A."/>
            <person name="Kimmel B.E."/>
            <person name="Kodira C.D."/>
            <person name="Kraft C.L."/>
            <person name="Kravitz S."/>
            <person name="Kulp D."/>
            <person name="Lai Z."/>
            <person name="Lasko P."/>
            <person name="Lei Y."/>
            <person name="Levitsky A.A."/>
            <person name="Li J.H."/>
            <person name="Li Z."/>
            <person name="Liang Y."/>
            <person name="Lin X."/>
            <person name="Liu X."/>
            <person name="Mattei B."/>
            <person name="McIntosh T.C."/>
            <person name="McLeod M.P."/>
            <person name="McPherson D."/>
            <person name="Merkulov G."/>
            <person name="Milshina N.V."/>
            <person name="Mobarry C."/>
            <person name="Morris J."/>
            <person name="Moshrefi A."/>
            <person name="Mount S.M."/>
            <person name="Moy M."/>
            <person name="Murphy B."/>
            <person name="Murphy L."/>
            <person name="Muzny D.M."/>
            <person name="Nelson D.L."/>
            <person name="Nelson D.R."/>
            <person name="Nelson K.A."/>
            <person name="Nixon K."/>
            <person name="Nusskern D.R."/>
            <person name="Pacleb J.M."/>
            <person name="Palazzolo M."/>
            <person name="Pittman G.S."/>
            <person name="Pan S."/>
            <person name="Pollard J."/>
            <person name="Puri V."/>
            <person name="Reese M.G."/>
            <person name="Reinert K."/>
            <person name="Remington K."/>
            <person name="Saunders R.D.C."/>
            <person name="Scheeler F."/>
            <person name="Shen H."/>
            <person name="Shue B.C."/>
            <person name="Siden-Kiamos I."/>
            <person name="Simpson M."/>
            <person name="Skupski M.P."/>
            <person name="Smith T.J."/>
            <person name="Spier E."/>
            <person name="Spradling A.C."/>
            <person name="Stapleton M."/>
            <person name="Strong R."/>
            <person name="Sun E."/>
            <person name="Svirskas R."/>
            <person name="Tector C."/>
            <person name="Turner R."/>
            <person name="Venter E."/>
            <person name="Wang A.H."/>
            <person name="Wang X."/>
            <person name="Wang Z.-Y."/>
            <person name="Wassarman D.A."/>
            <person name="Weinstock G.M."/>
            <person name="Weissenbach J."/>
            <person name="Williams S.M."/>
            <person name="Woodage T."/>
            <person name="Worley K.C."/>
            <person name="Wu D."/>
            <person name="Yang S."/>
            <person name="Yao Q.A."/>
            <person name="Ye J."/>
            <person name="Yeh R.-F."/>
            <person name="Zaveri J.S."/>
            <person name="Zhan M."/>
            <person name="Zhang G."/>
            <person name="Zhao Q."/>
            <person name="Zheng L."/>
            <person name="Zheng X.H."/>
            <person name="Zhong F.N."/>
            <person name="Zhong W."/>
            <person name="Zhou X."/>
            <person name="Zhu S.C."/>
            <person name="Zhu X."/>
            <person name="Smith H.O."/>
            <person name="Gibbs R.A."/>
            <person name="Myers E.W."/>
            <person name="Rubin G.M."/>
            <person name="Venter J.C."/>
        </authorList>
    </citation>
    <scope>NUCLEOTIDE SEQUENCE [LARGE SCALE GENOMIC DNA]</scope>
    <source>
        <strain>Berkeley</strain>
    </source>
</reference>
<reference key="3">
    <citation type="journal article" date="2002" name="Genome Biol.">
        <title>Annotation of the Drosophila melanogaster euchromatic genome: a systematic review.</title>
        <authorList>
            <person name="Misra S."/>
            <person name="Crosby M.A."/>
            <person name="Mungall C.J."/>
            <person name="Matthews B.B."/>
            <person name="Campbell K.S."/>
            <person name="Hradecky P."/>
            <person name="Huang Y."/>
            <person name="Kaminker J.S."/>
            <person name="Millburn G.H."/>
            <person name="Prochnik S.E."/>
            <person name="Smith C.D."/>
            <person name="Tupy J.L."/>
            <person name="Whitfield E.J."/>
            <person name="Bayraktaroglu L."/>
            <person name="Berman B.P."/>
            <person name="Bettencourt B.R."/>
            <person name="Celniker S.E."/>
            <person name="de Grey A.D.N.J."/>
            <person name="Drysdale R.A."/>
            <person name="Harris N.L."/>
            <person name="Richter J."/>
            <person name="Russo S."/>
            <person name="Schroeder A.J."/>
            <person name="Shu S.Q."/>
            <person name="Stapleton M."/>
            <person name="Yamada C."/>
            <person name="Ashburner M."/>
            <person name="Gelbart W.M."/>
            <person name="Rubin G.M."/>
            <person name="Lewis S.E."/>
        </authorList>
    </citation>
    <scope>GENOME REANNOTATION</scope>
    <source>
        <strain>Berkeley</strain>
    </source>
</reference>
<dbReference type="EMBL" id="Z33647">
    <property type="protein sequence ID" value="CAA83926.1"/>
    <property type="molecule type" value="Genomic_DNA"/>
</dbReference>
<dbReference type="EMBL" id="AE014297">
    <property type="protein sequence ID" value="AAF56514.1"/>
    <property type="molecule type" value="Genomic_DNA"/>
</dbReference>
<dbReference type="RefSeq" id="NP_524499.2">
    <property type="nucleotide sequence ID" value="NM_079775.5"/>
</dbReference>
<dbReference type="BioGRID" id="68028">
    <property type="interactions" value="3"/>
</dbReference>
<dbReference type="DIP" id="DIP-19873N"/>
<dbReference type="FunCoup" id="Q9VBL7">
    <property type="interactions" value="39"/>
</dbReference>
<dbReference type="IntAct" id="Q9VBL7">
    <property type="interactions" value="1"/>
</dbReference>
<dbReference type="STRING" id="7227.FBpp0084289"/>
<dbReference type="PaxDb" id="7227-FBpp0084289"/>
<dbReference type="EnsemblMetazoa" id="FBtr0084915">
    <property type="protein sequence ID" value="FBpp0084289"/>
    <property type="gene ID" value="FBgn0011669"/>
</dbReference>
<dbReference type="GeneID" id="43122"/>
<dbReference type="KEGG" id="dme:Dmel_CG5016"/>
<dbReference type="AGR" id="FB:FBgn0011669"/>
<dbReference type="CTD" id="43122"/>
<dbReference type="FlyBase" id="FBgn0011669">
    <property type="gene designation" value="Mst57Db"/>
</dbReference>
<dbReference type="VEuPathDB" id="VectorBase:FBgn0011669"/>
<dbReference type="HOGENOM" id="CLU_3299919_0_0_1"/>
<dbReference type="InParanoid" id="Q9VBL7"/>
<dbReference type="BioGRID-ORCS" id="43122">
    <property type="hits" value="0 hits in 1 CRISPR screen"/>
</dbReference>
<dbReference type="ChiTaRS" id="Mst57Db">
    <property type="organism name" value="fly"/>
</dbReference>
<dbReference type="GenomeRNAi" id="43122"/>
<dbReference type="PRO" id="PR:Q9VBL7"/>
<dbReference type="Proteomes" id="UP000000803">
    <property type="component" value="Chromosome 3R"/>
</dbReference>
<dbReference type="Bgee" id="FBgn0011669">
    <property type="expression patterns" value="Expressed in spermatid in male reproductive gland and 89 other cell types or tissues"/>
</dbReference>
<dbReference type="GO" id="GO:0005576">
    <property type="term" value="C:extracellular region"/>
    <property type="evidence" value="ECO:0000303"/>
    <property type="project" value="UniProtKB"/>
</dbReference>
<dbReference type="GO" id="GO:0005615">
    <property type="term" value="C:extracellular space"/>
    <property type="evidence" value="ECO:0007005"/>
    <property type="project" value="FlyBase"/>
</dbReference>
<dbReference type="GO" id="GO:0018991">
    <property type="term" value="P:egg-laying behavior"/>
    <property type="evidence" value="ECO:0000303"/>
    <property type="project" value="UniProtKB"/>
</dbReference>
<dbReference type="GO" id="GO:0045924">
    <property type="term" value="P:regulation of female receptivity"/>
    <property type="evidence" value="ECO:0000303"/>
    <property type="project" value="UniProtKB"/>
</dbReference>
<dbReference type="GO" id="GO:0019953">
    <property type="term" value="P:sexual reproduction"/>
    <property type="evidence" value="ECO:0007007"/>
    <property type="project" value="FlyBase"/>
</dbReference>
<evidence type="ECO:0000255" key="1"/>
<evidence type="ECO:0000269" key="2">
    <source>
    </source>
</evidence>
<evidence type="ECO:0000305" key="3"/>
<accession>Q9VBL7</accession>
<accession>Q24391</accession>
<keyword id="KW-0085">Behavior</keyword>
<keyword id="KW-1185">Reference proteome</keyword>
<keyword id="KW-0964">Secreted</keyword>
<keyword id="KW-0732">Signal</keyword>
<feature type="signal peptide" evidence="1">
    <location>
        <begin position="1"/>
        <end position="17"/>
    </location>
</feature>
<feature type="peptide" id="PRO_0000021763" description="Accessory gland-specific peptide 57Db">
    <location>
        <begin position="18"/>
        <end position="40"/>
    </location>
</feature>
<feature type="sequence conflict" description="In Ref. 1; CAA83926." evidence="3" ref="1">
    <original>S</original>
    <variation>N</variation>
    <location>
        <position position="37"/>
    </location>
</feature>